<organism>
    <name type="scientific">Bacillus subtilis (strain 168)</name>
    <dbReference type="NCBI Taxonomy" id="224308"/>
    <lineage>
        <taxon>Bacteria</taxon>
        <taxon>Bacillati</taxon>
        <taxon>Bacillota</taxon>
        <taxon>Bacilli</taxon>
        <taxon>Bacillales</taxon>
        <taxon>Bacillaceae</taxon>
        <taxon>Bacillus</taxon>
    </lineage>
</organism>
<feature type="chain" id="PRO_0000097787" description="Cyclic pyranopterin monophosphate synthase">
    <location>
        <begin position="1"/>
        <end position="170"/>
    </location>
</feature>
<feature type="active site" evidence="1">
    <location>
        <position position="130"/>
    </location>
</feature>
<feature type="binding site" evidence="1">
    <location>
        <begin position="75"/>
        <end position="77"/>
    </location>
    <ligand>
        <name>substrate</name>
    </ligand>
</feature>
<feature type="binding site" evidence="1">
    <location>
        <begin position="115"/>
        <end position="116"/>
    </location>
    <ligand>
        <name>substrate</name>
    </ligand>
</feature>
<proteinExistence type="inferred from homology"/>
<dbReference type="EC" id="4.6.1.17" evidence="1"/>
<dbReference type="EMBL" id="D88802">
    <property type="protein sequence ID" value="BAA19720.1"/>
    <property type="molecule type" value="Genomic_DNA"/>
</dbReference>
<dbReference type="EMBL" id="AL009126">
    <property type="protein sequence ID" value="CAB12415.1"/>
    <property type="molecule type" value="Genomic_DNA"/>
</dbReference>
<dbReference type="PIR" id="H69786">
    <property type="entry name" value="H69786"/>
</dbReference>
<dbReference type="RefSeq" id="NP_388477.1">
    <property type="nucleotide sequence ID" value="NC_000964.3"/>
</dbReference>
<dbReference type="RefSeq" id="WP_003243499.1">
    <property type="nucleotide sequence ID" value="NZ_OZ025638.1"/>
</dbReference>
<dbReference type="SMR" id="O05520"/>
<dbReference type="FunCoup" id="O05520">
    <property type="interactions" value="518"/>
</dbReference>
<dbReference type="STRING" id="224308.BSU05960"/>
<dbReference type="PaxDb" id="224308-BSU05960"/>
<dbReference type="EnsemblBacteria" id="CAB12415">
    <property type="protein sequence ID" value="CAB12415"/>
    <property type="gene ID" value="BSU_05960"/>
</dbReference>
<dbReference type="GeneID" id="86874966"/>
<dbReference type="GeneID" id="939875"/>
<dbReference type="KEGG" id="bsu:BSU05960"/>
<dbReference type="PATRIC" id="fig|224308.179.peg.641"/>
<dbReference type="eggNOG" id="COG0315">
    <property type="taxonomic scope" value="Bacteria"/>
</dbReference>
<dbReference type="InParanoid" id="O05520"/>
<dbReference type="OrthoDB" id="9794429at2"/>
<dbReference type="PhylomeDB" id="O05520"/>
<dbReference type="BioCyc" id="BSUB:BSU05960-MONOMER"/>
<dbReference type="UniPathway" id="UPA00344"/>
<dbReference type="Proteomes" id="UP000001570">
    <property type="component" value="Chromosome"/>
</dbReference>
<dbReference type="GO" id="GO:0061799">
    <property type="term" value="F:cyclic pyranopterin monophosphate synthase activity"/>
    <property type="evidence" value="ECO:0007669"/>
    <property type="project" value="UniProtKB-UniRule"/>
</dbReference>
<dbReference type="GO" id="GO:0006777">
    <property type="term" value="P:Mo-molybdopterin cofactor biosynthetic process"/>
    <property type="evidence" value="ECO:0007669"/>
    <property type="project" value="UniProtKB-UniRule"/>
</dbReference>
<dbReference type="CDD" id="cd01420">
    <property type="entry name" value="MoaC_PE"/>
    <property type="match status" value="1"/>
</dbReference>
<dbReference type="Gene3D" id="3.30.70.640">
    <property type="entry name" value="Molybdopterin cofactor biosynthesis C (MoaC) domain"/>
    <property type="match status" value="1"/>
</dbReference>
<dbReference type="HAMAP" id="MF_01224_B">
    <property type="entry name" value="MoaC_B"/>
    <property type="match status" value="1"/>
</dbReference>
<dbReference type="InterPro" id="IPR023045">
    <property type="entry name" value="MoaC"/>
</dbReference>
<dbReference type="InterPro" id="IPR047594">
    <property type="entry name" value="MoaC_bact/euk"/>
</dbReference>
<dbReference type="InterPro" id="IPR036522">
    <property type="entry name" value="MoaC_sf"/>
</dbReference>
<dbReference type="InterPro" id="IPR050105">
    <property type="entry name" value="MoCo_biosynth_MoaA/MoaC"/>
</dbReference>
<dbReference type="InterPro" id="IPR002820">
    <property type="entry name" value="Mopterin_CF_biosynth-C_dom"/>
</dbReference>
<dbReference type="NCBIfam" id="TIGR00581">
    <property type="entry name" value="moaC"/>
    <property type="match status" value="1"/>
</dbReference>
<dbReference type="NCBIfam" id="NF006870">
    <property type="entry name" value="PRK09364.1"/>
    <property type="match status" value="1"/>
</dbReference>
<dbReference type="PANTHER" id="PTHR22960:SF29">
    <property type="entry name" value="CYCLIC PYRANOPTERIN MONOPHOSPHATE SYNTHASE"/>
    <property type="match status" value="1"/>
</dbReference>
<dbReference type="PANTHER" id="PTHR22960">
    <property type="entry name" value="MOLYBDOPTERIN COFACTOR SYNTHESIS PROTEIN A"/>
    <property type="match status" value="1"/>
</dbReference>
<dbReference type="Pfam" id="PF01967">
    <property type="entry name" value="MoaC"/>
    <property type="match status" value="1"/>
</dbReference>
<dbReference type="SUPFAM" id="SSF55040">
    <property type="entry name" value="Molybdenum cofactor biosynthesis protein C, MoaC"/>
    <property type="match status" value="1"/>
</dbReference>
<keyword id="KW-0456">Lyase</keyword>
<keyword id="KW-0501">Molybdenum cofactor biosynthesis</keyword>
<keyword id="KW-1185">Reference proteome</keyword>
<comment type="function">
    <text evidence="1">Catalyzes the conversion of (8S)-3',8-cyclo-7,8-dihydroguanosine 5'-triphosphate to cyclic pyranopterin monophosphate (cPMP).</text>
</comment>
<comment type="catalytic activity">
    <reaction evidence="1">
        <text>(8S)-3',8-cyclo-7,8-dihydroguanosine 5'-triphosphate = cyclic pyranopterin phosphate + diphosphate</text>
        <dbReference type="Rhea" id="RHEA:49580"/>
        <dbReference type="ChEBI" id="CHEBI:33019"/>
        <dbReference type="ChEBI" id="CHEBI:59648"/>
        <dbReference type="ChEBI" id="CHEBI:131766"/>
        <dbReference type="EC" id="4.6.1.17"/>
    </reaction>
</comment>
<comment type="pathway">
    <text evidence="1">Cofactor biosynthesis; molybdopterin biosynthesis.</text>
</comment>
<comment type="subunit">
    <text evidence="1">Homohexamer; trimer of dimers.</text>
</comment>
<comment type="similarity">
    <text evidence="1">Belongs to the MoaC family.</text>
</comment>
<reference key="1">
    <citation type="journal article" date="1997" name="Microbiology">
        <title>Nucleotide sequence and analysis of the phoB-rrnE-groESL region of the Bacillus subtilis chromosome.</title>
        <authorList>
            <person name="Sadaie Y."/>
            <person name="Yata K."/>
            <person name="Fujita M."/>
            <person name="Sagai H."/>
            <person name="Itaya M."/>
            <person name="Kasahara Y."/>
            <person name="Ogasawara N."/>
        </authorList>
    </citation>
    <scope>NUCLEOTIDE SEQUENCE [GENOMIC DNA]</scope>
    <source>
        <strain>168 / JH642</strain>
    </source>
</reference>
<reference key="2">
    <citation type="journal article" date="1997" name="Nature">
        <title>The complete genome sequence of the Gram-positive bacterium Bacillus subtilis.</title>
        <authorList>
            <person name="Kunst F."/>
            <person name="Ogasawara N."/>
            <person name="Moszer I."/>
            <person name="Albertini A.M."/>
            <person name="Alloni G."/>
            <person name="Azevedo V."/>
            <person name="Bertero M.G."/>
            <person name="Bessieres P."/>
            <person name="Bolotin A."/>
            <person name="Borchert S."/>
            <person name="Borriss R."/>
            <person name="Boursier L."/>
            <person name="Brans A."/>
            <person name="Braun M."/>
            <person name="Brignell S.C."/>
            <person name="Bron S."/>
            <person name="Brouillet S."/>
            <person name="Bruschi C.V."/>
            <person name="Caldwell B."/>
            <person name="Capuano V."/>
            <person name="Carter N.M."/>
            <person name="Choi S.-K."/>
            <person name="Codani J.-J."/>
            <person name="Connerton I.F."/>
            <person name="Cummings N.J."/>
            <person name="Daniel R.A."/>
            <person name="Denizot F."/>
            <person name="Devine K.M."/>
            <person name="Duesterhoeft A."/>
            <person name="Ehrlich S.D."/>
            <person name="Emmerson P.T."/>
            <person name="Entian K.-D."/>
            <person name="Errington J."/>
            <person name="Fabret C."/>
            <person name="Ferrari E."/>
            <person name="Foulger D."/>
            <person name="Fritz C."/>
            <person name="Fujita M."/>
            <person name="Fujita Y."/>
            <person name="Fuma S."/>
            <person name="Galizzi A."/>
            <person name="Galleron N."/>
            <person name="Ghim S.-Y."/>
            <person name="Glaser P."/>
            <person name="Goffeau A."/>
            <person name="Golightly E.J."/>
            <person name="Grandi G."/>
            <person name="Guiseppi G."/>
            <person name="Guy B.J."/>
            <person name="Haga K."/>
            <person name="Haiech J."/>
            <person name="Harwood C.R."/>
            <person name="Henaut A."/>
            <person name="Hilbert H."/>
            <person name="Holsappel S."/>
            <person name="Hosono S."/>
            <person name="Hullo M.-F."/>
            <person name="Itaya M."/>
            <person name="Jones L.-M."/>
            <person name="Joris B."/>
            <person name="Karamata D."/>
            <person name="Kasahara Y."/>
            <person name="Klaerr-Blanchard M."/>
            <person name="Klein C."/>
            <person name="Kobayashi Y."/>
            <person name="Koetter P."/>
            <person name="Koningstein G."/>
            <person name="Krogh S."/>
            <person name="Kumano M."/>
            <person name="Kurita K."/>
            <person name="Lapidus A."/>
            <person name="Lardinois S."/>
            <person name="Lauber J."/>
            <person name="Lazarevic V."/>
            <person name="Lee S.-M."/>
            <person name="Levine A."/>
            <person name="Liu H."/>
            <person name="Masuda S."/>
            <person name="Mauel C."/>
            <person name="Medigue C."/>
            <person name="Medina N."/>
            <person name="Mellado R.P."/>
            <person name="Mizuno M."/>
            <person name="Moestl D."/>
            <person name="Nakai S."/>
            <person name="Noback M."/>
            <person name="Noone D."/>
            <person name="O'Reilly M."/>
            <person name="Ogawa K."/>
            <person name="Ogiwara A."/>
            <person name="Oudega B."/>
            <person name="Park S.-H."/>
            <person name="Parro V."/>
            <person name="Pohl T.M."/>
            <person name="Portetelle D."/>
            <person name="Porwollik S."/>
            <person name="Prescott A.M."/>
            <person name="Presecan E."/>
            <person name="Pujic P."/>
            <person name="Purnelle B."/>
            <person name="Rapoport G."/>
            <person name="Rey M."/>
            <person name="Reynolds S."/>
            <person name="Rieger M."/>
            <person name="Rivolta C."/>
            <person name="Rocha E."/>
            <person name="Roche B."/>
            <person name="Rose M."/>
            <person name="Sadaie Y."/>
            <person name="Sato T."/>
            <person name="Scanlan E."/>
            <person name="Schleich S."/>
            <person name="Schroeter R."/>
            <person name="Scoffone F."/>
            <person name="Sekiguchi J."/>
            <person name="Sekowska A."/>
            <person name="Seror S.J."/>
            <person name="Serror P."/>
            <person name="Shin B.-S."/>
            <person name="Soldo B."/>
            <person name="Sorokin A."/>
            <person name="Tacconi E."/>
            <person name="Takagi T."/>
            <person name="Takahashi H."/>
            <person name="Takemaru K."/>
            <person name="Takeuchi M."/>
            <person name="Tamakoshi A."/>
            <person name="Tanaka T."/>
            <person name="Terpstra P."/>
            <person name="Tognoni A."/>
            <person name="Tosato V."/>
            <person name="Uchiyama S."/>
            <person name="Vandenbol M."/>
            <person name="Vannier F."/>
            <person name="Vassarotti A."/>
            <person name="Viari A."/>
            <person name="Wambutt R."/>
            <person name="Wedler E."/>
            <person name="Wedler H."/>
            <person name="Weitzenegger T."/>
            <person name="Winters P."/>
            <person name="Wipat A."/>
            <person name="Yamamoto H."/>
            <person name="Yamane K."/>
            <person name="Yasumoto K."/>
            <person name="Yata K."/>
            <person name="Yoshida K."/>
            <person name="Yoshikawa H.-F."/>
            <person name="Zumstein E."/>
            <person name="Yoshikawa H."/>
            <person name="Danchin A."/>
        </authorList>
    </citation>
    <scope>NUCLEOTIDE SEQUENCE [LARGE SCALE GENOMIC DNA]</scope>
    <source>
        <strain>168</strain>
    </source>
</reference>
<gene>
    <name evidence="1" type="primary">moaC</name>
    <name type="synonym">ydiG</name>
    <name type="ordered locus">BSU05960</name>
</gene>
<protein>
    <recommendedName>
        <fullName evidence="1">Cyclic pyranopterin monophosphate synthase</fullName>
        <ecNumber evidence="1">4.6.1.17</ecNumber>
    </recommendedName>
    <alternativeName>
        <fullName evidence="1">Molybdenum cofactor biosynthesis protein C</fullName>
    </alternativeName>
</protein>
<name>MOAC_BACSU</name>
<sequence>MNGFSHFNEQGRAQMVDISEKSSTVRTAAAVSSVHMKNEVYEKIQSHDIGKGDVLAVAQVAGIMAAKQTSNIIPMCHPLSLSGVDISFDWKIKEAEVILHIKAQVKTKGSTGVEMEALTSASVCALTVYDMCKALDKGMVIGPTFLLEKTGGKNGDFKRELSEYNLEDQK</sequence>
<accession>O05520</accession>
<evidence type="ECO:0000255" key="1">
    <source>
        <dbReference type="HAMAP-Rule" id="MF_01224"/>
    </source>
</evidence>